<sequence>MANFTAADVKRLRELTGAGMLDCKNALAESDGDFDKAVEALRIKGAKDVGKRAERATAEGLVAAQGGALIELNSETDFVAKNAEFQALADQIVAAAASSKAADVDALKAAKIGDTTVEQAIAELSAKIGEKLELRRVAHFDGTVEAYLHRRAADLPPAVGVLVEYQGSGKDSDKEAAHAVALQIAALKARYLSRDDVPEDVVASERRIAEETAKAEGKPEQALPKIVEGRLNGFFKDAVLLEQPSVSDSKKTVKALLDEAGVTVTRFVRFEVGQA</sequence>
<keyword id="KW-0963">Cytoplasm</keyword>
<keyword id="KW-0251">Elongation factor</keyword>
<keyword id="KW-0648">Protein biosynthesis</keyword>
<evidence type="ECO:0000255" key="1">
    <source>
        <dbReference type="HAMAP-Rule" id="MF_00050"/>
    </source>
</evidence>
<protein>
    <recommendedName>
        <fullName evidence="1">Elongation factor Ts</fullName>
        <shortName evidence="1">EF-Ts</shortName>
    </recommendedName>
</protein>
<proteinExistence type="inferred from homology"/>
<name>EFTS_MYCA1</name>
<reference key="1">
    <citation type="submission" date="2006-10" db="EMBL/GenBank/DDBJ databases">
        <authorList>
            <person name="Fleischmann R.D."/>
            <person name="Dodson R.J."/>
            <person name="Haft D.H."/>
            <person name="Merkel J.S."/>
            <person name="Nelson W.C."/>
            <person name="Fraser C.M."/>
        </authorList>
    </citation>
    <scope>NUCLEOTIDE SEQUENCE [LARGE SCALE GENOMIC DNA]</scope>
    <source>
        <strain>104</strain>
    </source>
</reference>
<accession>A0QJ27</accession>
<dbReference type="EMBL" id="CP000479">
    <property type="protein sequence ID" value="ABK67396.1"/>
    <property type="molecule type" value="Genomic_DNA"/>
</dbReference>
<dbReference type="RefSeq" id="WP_011725650.1">
    <property type="nucleotide sequence ID" value="NC_008595.1"/>
</dbReference>
<dbReference type="SMR" id="A0QJ27"/>
<dbReference type="GeneID" id="75271136"/>
<dbReference type="KEGG" id="mav:MAV_3743"/>
<dbReference type="HOGENOM" id="CLU_047155_0_0_11"/>
<dbReference type="Proteomes" id="UP000001574">
    <property type="component" value="Chromosome"/>
</dbReference>
<dbReference type="GO" id="GO:0005737">
    <property type="term" value="C:cytoplasm"/>
    <property type="evidence" value="ECO:0007669"/>
    <property type="project" value="UniProtKB-SubCell"/>
</dbReference>
<dbReference type="GO" id="GO:0003746">
    <property type="term" value="F:translation elongation factor activity"/>
    <property type="evidence" value="ECO:0007669"/>
    <property type="project" value="UniProtKB-UniRule"/>
</dbReference>
<dbReference type="CDD" id="cd14275">
    <property type="entry name" value="UBA_EF-Ts"/>
    <property type="match status" value="1"/>
</dbReference>
<dbReference type="FunFam" id="1.10.286.20:FF:000001">
    <property type="entry name" value="Elongation factor Ts"/>
    <property type="match status" value="1"/>
</dbReference>
<dbReference type="FunFam" id="1.10.8.10:FF:000001">
    <property type="entry name" value="Elongation factor Ts"/>
    <property type="match status" value="1"/>
</dbReference>
<dbReference type="Gene3D" id="1.10.286.20">
    <property type="match status" value="1"/>
</dbReference>
<dbReference type="Gene3D" id="1.10.8.10">
    <property type="entry name" value="DNA helicase RuvA subunit, C-terminal domain"/>
    <property type="match status" value="1"/>
</dbReference>
<dbReference type="Gene3D" id="3.30.479.20">
    <property type="entry name" value="Elongation factor Ts, dimerisation domain"/>
    <property type="match status" value="2"/>
</dbReference>
<dbReference type="HAMAP" id="MF_00050">
    <property type="entry name" value="EF_Ts"/>
    <property type="match status" value="1"/>
</dbReference>
<dbReference type="InterPro" id="IPR036402">
    <property type="entry name" value="EF-Ts_dimer_sf"/>
</dbReference>
<dbReference type="InterPro" id="IPR001816">
    <property type="entry name" value="Transl_elong_EFTs/EF1B"/>
</dbReference>
<dbReference type="InterPro" id="IPR014039">
    <property type="entry name" value="Transl_elong_EFTs/EF1B_dimer"/>
</dbReference>
<dbReference type="InterPro" id="IPR018101">
    <property type="entry name" value="Transl_elong_Ts_CS"/>
</dbReference>
<dbReference type="InterPro" id="IPR009060">
    <property type="entry name" value="UBA-like_sf"/>
</dbReference>
<dbReference type="NCBIfam" id="TIGR00116">
    <property type="entry name" value="tsf"/>
    <property type="match status" value="1"/>
</dbReference>
<dbReference type="PANTHER" id="PTHR11741">
    <property type="entry name" value="ELONGATION FACTOR TS"/>
    <property type="match status" value="1"/>
</dbReference>
<dbReference type="PANTHER" id="PTHR11741:SF0">
    <property type="entry name" value="ELONGATION FACTOR TS, MITOCHONDRIAL"/>
    <property type="match status" value="1"/>
</dbReference>
<dbReference type="Pfam" id="PF00889">
    <property type="entry name" value="EF_TS"/>
    <property type="match status" value="1"/>
</dbReference>
<dbReference type="SUPFAM" id="SSF54713">
    <property type="entry name" value="Elongation factor Ts (EF-Ts), dimerisation domain"/>
    <property type="match status" value="1"/>
</dbReference>
<dbReference type="SUPFAM" id="SSF46934">
    <property type="entry name" value="UBA-like"/>
    <property type="match status" value="1"/>
</dbReference>
<dbReference type="PROSITE" id="PS01126">
    <property type="entry name" value="EF_TS_1"/>
    <property type="match status" value="1"/>
</dbReference>
<dbReference type="PROSITE" id="PS01127">
    <property type="entry name" value="EF_TS_2"/>
    <property type="match status" value="1"/>
</dbReference>
<feature type="chain" id="PRO_1000006126" description="Elongation factor Ts">
    <location>
        <begin position="1"/>
        <end position="275"/>
    </location>
</feature>
<feature type="region of interest" description="Involved in Mg(2+) ion dislocation from EF-Tu" evidence="1">
    <location>
        <begin position="76"/>
        <end position="79"/>
    </location>
</feature>
<organism>
    <name type="scientific">Mycobacterium avium (strain 104)</name>
    <dbReference type="NCBI Taxonomy" id="243243"/>
    <lineage>
        <taxon>Bacteria</taxon>
        <taxon>Bacillati</taxon>
        <taxon>Actinomycetota</taxon>
        <taxon>Actinomycetes</taxon>
        <taxon>Mycobacteriales</taxon>
        <taxon>Mycobacteriaceae</taxon>
        <taxon>Mycobacterium</taxon>
        <taxon>Mycobacterium avium complex (MAC)</taxon>
    </lineage>
</organism>
<comment type="function">
    <text evidence="1">Associates with the EF-Tu.GDP complex and induces the exchange of GDP to GTP. It remains bound to the aminoacyl-tRNA.EF-Tu.GTP complex up to the GTP hydrolysis stage on the ribosome.</text>
</comment>
<comment type="subcellular location">
    <subcellularLocation>
        <location evidence="1">Cytoplasm</location>
    </subcellularLocation>
</comment>
<comment type="similarity">
    <text evidence="1">Belongs to the EF-Ts family.</text>
</comment>
<gene>
    <name evidence="1" type="primary">tsf</name>
    <name type="ordered locus">MAV_3743</name>
</gene>